<feature type="chain" id="PRO_0000176588" description="Transcription antitermination protein NusB">
    <location>
        <begin position="1"/>
        <end position="142"/>
    </location>
</feature>
<dbReference type="EMBL" id="AL939109">
    <property type="protein sequence ID" value="CAB93370.1"/>
    <property type="molecule type" value="Genomic_DNA"/>
</dbReference>
<dbReference type="RefSeq" id="NP_625770.1">
    <property type="nucleotide sequence ID" value="NC_003888.3"/>
</dbReference>
<dbReference type="RefSeq" id="WP_003977336.1">
    <property type="nucleotide sequence ID" value="NZ_VNID01000021.1"/>
</dbReference>
<dbReference type="SMR" id="Q9KXR0"/>
<dbReference type="FunCoup" id="Q9KXR0">
    <property type="interactions" value="45"/>
</dbReference>
<dbReference type="STRING" id="100226.gene:17759076"/>
<dbReference type="PaxDb" id="100226-SCO1490"/>
<dbReference type="GeneID" id="96651659"/>
<dbReference type="KEGG" id="sco:SCO1490"/>
<dbReference type="PATRIC" id="fig|100226.15.peg.1499"/>
<dbReference type="eggNOG" id="COG0781">
    <property type="taxonomic scope" value="Bacteria"/>
</dbReference>
<dbReference type="HOGENOM" id="CLU_087843_2_3_11"/>
<dbReference type="InParanoid" id="Q9KXR0"/>
<dbReference type="OrthoDB" id="3528057at2"/>
<dbReference type="PhylomeDB" id="Q9KXR0"/>
<dbReference type="Proteomes" id="UP000001973">
    <property type="component" value="Chromosome"/>
</dbReference>
<dbReference type="GO" id="GO:0005829">
    <property type="term" value="C:cytosol"/>
    <property type="evidence" value="ECO:0000318"/>
    <property type="project" value="GO_Central"/>
</dbReference>
<dbReference type="GO" id="GO:0003723">
    <property type="term" value="F:RNA binding"/>
    <property type="evidence" value="ECO:0007669"/>
    <property type="project" value="UniProtKB-UniRule"/>
</dbReference>
<dbReference type="GO" id="GO:0006353">
    <property type="term" value="P:DNA-templated transcription termination"/>
    <property type="evidence" value="ECO:0007669"/>
    <property type="project" value="UniProtKB-UniRule"/>
</dbReference>
<dbReference type="GO" id="GO:0031564">
    <property type="term" value="P:transcription antitermination"/>
    <property type="evidence" value="ECO:0007669"/>
    <property type="project" value="UniProtKB-KW"/>
</dbReference>
<dbReference type="FunFam" id="1.10.940.10:FF:000012">
    <property type="entry name" value="Transcription antitermination protein NusB"/>
    <property type="match status" value="1"/>
</dbReference>
<dbReference type="Gene3D" id="1.10.940.10">
    <property type="entry name" value="NusB-like"/>
    <property type="match status" value="1"/>
</dbReference>
<dbReference type="HAMAP" id="MF_00073">
    <property type="entry name" value="NusB"/>
    <property type="match status" value="1"/>
</dbReference>
<dbReference type="InterPro" id="IPR035926">
    <property type="entry name" value="NusB-like_sf"/>
</dbReference>
<dbReference type="InterPro" id="IPR011605">
    <property type="entry name" value="NusB_fam"/>
</dbReference>
<dbReference type="InterPro" id="IPR006027">
    <property type="entry name" value="NusB_RsmB_TIM44"/>
</dbReference>
<dbReference type="NCBIfam" id="TIGR01951">
    <property type="entry name" value="nusB"/>
    <property type="match status" value="1"/>
</dbReference>
<dbReference type="PANTHER" id="PTHR11078:SF3">
    <property type="entry name" value="ANTITERMINATION NUSB DOMAIN-CONTAINING PROTEIN"/>
    <property type="match status" value="1"/>
</dbReference>
<dbReference type="PANTHER" id="PTHR11078">
    <property type="entry name" value="N UTILIZATION SUBSTANCE PROTEIN B-RELATED"/>
    <property type="match status" value="1"/>
</dbReference>
<dbReference type="Pfam" id="PF01029">
    <property type="entry name" value="NusB"/>
    <property type="match status" value="1"/>
</dbReference>
<dbReference type="SUPFAM" id="SSF48013">
    <property type="entry name" value="NusB-like"/>
    <property type="match status" value="1"/>
</dbReference>
<name>NUSB_STRCO</name>
<proteinExistence type="inferred from homology"/>
<sequence length="142" mass="16222">MAARNTARKRAFQILFEGDQRGADVLTVLADWVRHSRSDTRQPPVSEYTMELVEGYAGRAERIDELIAQYSVDWTLDRMPVVDRNILRLGAYELLWVDATPDAVVLDEMVQLAKEFSTDESPAFINGLLGRLKELKPSLRRE</sequence>
<gene>
    <name evidence="1" type="primary">nusB</name>
    <name type="ordered locus">SCO1490</name>
    <name type="ORF">SC9C5.14c</name>
</gene>
<reference key="1">
    <citation type="journal article" date="2002" name="Nature">
        <title>Complete genome sequence of the model actinomycete Streptomyces coelicolor A3(2).</title>
        <authorList>
            <person name="Bentley S.D."/>
            <person name="Chater K.F."/>
            <person name="Cerdeno-Tarraga A.-M."/>
            <person name="Challis G.L."/>
            <person name="Thomson N.R."/>
            <person name="James K.D."/>
            <person name="Harris D.E."/>
            <person name="Quail M.A."/>
            <person name="Kieser H."/>
            <person name="Harper D."/>
            <person name="Bateman A."/>
            <person name="Brown S."/>
            <person name="Chandra G."/>
            <person name="Chen C.W."/>
            <person name="Collins M."/>
            <person name="Cronin A."/>
            <person name="Fraser A."/>
            <person name="Goble A."/>
            <person name="Hidalgo J."/>
            <person name="Hornsby T."/>
            <person name="Howarth S."/>
            <person name="Huang C.-H."/>
            <person name="Kieser T."/>
            <person name="Larke L."/>
            <person name="Murphy L.D."/>
            <person name="Oliver K."/>
            <person name="O'Neil S."/>
            <person name="Rabbinowitsch E."/>
            <person name="Rajandream M.A."/>
            <person name="Rutherford K.M."/>
            <person name="Rutter S."/>
            <person name="Seeger K."/>
            <person name="Saunders D."/>
            <person name="Sharp S."/>
            <person name="Squares R."/>
            <person name="Squares S."/>
            <person name="Taylor K."/>
            <person name="Warren T."/>
            <person name="Wietzorrek A."/>
            <person name="Woodward J.R."/>
            <person name="Barrell B.G."/>
            <person name="Parkhill J."/>
            <person name="Hopwood D.A."/>
        </authorList>
    </citation>
    <scope>NUCLEOTIDE SEQUENCE [LARGE SCALE GENOMIC DNA]</scope>
    <source>
        <strain>ATCC BAA-471 / A3(2) / M145</strain>
    </source>
</reference>
<accession>Q9KXR0</accession>
<protein>
    <recommendedName>
        <fullName evidence="1">Transcription antitermination protein NusB</fullName>
    </recommendedName>
    <alternativeName>
        <fullName evidence="1">Antitermination factor NusB</fullName>
    </alternativeName>
</protein>
<keyword id="KW-1185">Reference proteome</keyword>
<keyword id="KW-0694">RNA-binding</keyword>
<keyword id="KW-0804">Transcription</keyword>
<keyword id="KW-0889">Transcription antitermination</keyword>
<keyword id="KW-0805">Transcription regulation</keyword>
<evidence type="ECO:0000255" key="1">
    <source>
        <dbReference type="HAMAP-Rule" id="MF_00073"/>
    </source>
</evidence>
<organism>
    <name type="scientific">Streptomyces coelicolor (strain ATCC BAA-471 / A3(2) / M145)</name>
    <dbReference type="NCBI Taxonomy" id="100226"/>
    <lineage>
        <taxon>Bacteria</taxon>
        <taxon>Bacillati</taxon>
        <taxon>Actinomycetota</taxon>
        <taxon>Actinomycetes</taxon>
        <taxon>Kitasatosporales</taxon>
        <taxon>Streptomycetaceae</taxon>
        <taxon>Streptomyces</taxon>
        <taxon>Streptomyces albidoflavus group</taxon>
    </lineage>
</organism>
<comment type="function">
    <text evidence="1">Involved in transcription antitermination. Required for transcription of ribosomal RNA (rRNA) genes. Binds specifically to the boxA antiterminator sequence of the ribosomal RNA (rrn) operons.</text>
</comment>
<comment type="similarity">
    <text evidence="1">Belongs to the NusB family.</text>
</comment>